<sequence length="521" mass="55311">MRKIMLIASAMSALSLPFSANAIEFDENSLECGPYAKVGIVGGVLSGVESARLDPADSEGKKHLPLIKGMPFGVTLAAGMTITPGVRAEISAMYLMNVKAEVELGKMGSDANTGTTADASAGVIRKHKKLTPPQPNIMPISIADRDIAVDIPNAAGQGNVDVRAAARIAWLKNYAGIDYYVPDSNNPQGRVVNPVLLNIPQGNPNPAGGGGRAAPAAFDILDHAQWRDVVVGITALSNANKPNVSAVKILSDKISQIYADIKPFANVASVQISETPLPDSASVDQIQNKVQELNKVLEDVRESFDGFILNAFAQPVRLNFQIPQVVQGQGQQPQAAATAQEAAAAAAIRALNDGENNGIIQLYKDLYKLQRNVALKKSMKQLGDELGVDQGQEGGCSKDKKQSDTTAEESKKEGKKGKEIEFDLHMAVGQVKLYADLFTIDSFSVYAGIGAGLAYTHGKIDGKDIKAHTGMVGSLALGVAANVADGVYMDVDAGYLYSFSKIEEKYQMNAFVASAGIRYNF</sequence>
<evidence type="ECO:0000255" key="1"/>
<evidence type="ECO:0000256" key="2">
    <source>
        <dbReference type="SAM" id="MobiDB-lite"/>
    </source>
</evidence>
<dbReference type="EMBL" id="M63381">
    <property type="protein sequence ID" value="AAA26396.1"/>
    <property type="molecule type" value="Genomic_DNA"/>
</dbReference>
<dbReference type="PIR" id="D42804">
    <property type="entry name" value="D42804"/>
</dbReference>
<dbReference type="GO" id="GO:0005886">
    <property type="term" value="C:plasma membrane"/>
    <property type="evidence" value="ECO:0007669"/>
    <property type="project" value="UniProtKB-SubCell"/>
</dbReference>
<dbReference type="Gene3D" id="2.40.160.20">
    <property type="match status" value="1"/>
</dbReference>
<dbReference type="InterPro" id="IPR011250">
    <property type="entry name" value="OMP/PagP_b-brl"/>
</dbReference>
<dbReference type="InterPro" id="IPR004933">
    <property type="entry name" value="TSA"/>
</dbReference>
<dbReference type="NCBIfam" id="NF033390">
    <property type="entry name" value="Orientia_TSA56"/>
    <property type="match status" value="1"/>
</dbReference>
<dbReference type="Pfam" id="PF03249">
    <property type="entry name" value="TSA"/>
    <property type="match status" value="1"/>
</dbReference>
<dbReference type="PRINTS" id="PR01707">
    <property type="entry name" value="56KDTSANTIGN"/>
</dbReference>
<dbReference type="SUPFAM" id="SSF56925">
    <property type="entry name" value="OMPA-like"/>
    <property type="match status" value="1"/>
</dbReference>
<proteinExistence type="inferred from homology"/>
<reference key="1">
    <citation type="journal article" date="1992" name="J. Biol. Chem.">
        <title>Diversity of immunodominant 56-kDa type-specific antigen (TSA) of Rickettsia tsutsugamushi. Sequence and comparative analyses of the genes encoding TSA homologues from four antigenic variants.</title>
        <authorList>
            <person name="Ohashi N."/>
            <person name="Nashimoto H."/>
            <person name="Ikeda H."/>
            <person name="Tamura A."/>
        </authorList>
    </citation>
    <scope>NUCLEOTIDE SEQUENCE [GENOMIC DNA]</scope>
    <source>
        <strain>Shimokoshi</strain>
    </source>
</reference>
<accession>P37917</accession>
<keyword id="KW-1003">Cell membrane</keyword>
<keyword id="KW-0472">Membrane</keyword>
<keyword id="KW-0732">Signal</keyword>
<keyword id="KW-0812">Transmembrane</keyword>
<keyword id="KW-1133">Transmembrane helix</keyword>
<keyword id="KW-0843">Virulence</keyword>
<comment type="function">
    <text>May be an adherent factor for rickettsial adsorption to the host-cell surface and a determinant of virulence of individual rickettsial strain. It is the major outer membrane protein.</text>
</comment>
<comment type="subcellular location">
    <subcellularLocation>
        <location>Cell membrane</location>
        <topology>Multi-pass membrane protein</topology>
    </subcellularLocation>
</comment>
<name>TSAS_ORITS</name>
<feature type="signal peptide" evidence="1">
    <location>
        <begin position="1"/>
        <end position="22"/>
    </location>
</feature>
<feature type="chain" id="PRO_0000022594" description="56 kDa type-specific antigen">
    <location>
        <begin position="23"/>
        <end position="521"/>
    </location>
</feature>
<feature type="transmembrane region" description="Helical" evidence="1">
    <location>
        <begin position="64"/>
        <end position="86"/>
    </location>
</feature>
<feature type="transmembrane region" description="Helical" evidence="1">
    <location>
        <begin position="469"/>
        <end position="484"/>
    </location>
</feature>
<feature type="region of interest" description="Disordered" evidence="2">
    <location>
        <begin position="386"/>
        <end position="415"/>
    </location>
</feature>
<feature type="compositionally biased region" description="Basic and acidic residues" evidence="2">
    <location>
        <begin position="396"/>
        <end position="415"/>
    </location>
</feature>
<protein>
    <recommendedName>
        <fullName>56 kDa type-specific antigen</fullName>
        <shortName>TSA</shortName>
    </recommendedName>
    <alternativeName>
        <fullName>56 kDa scrub typhus antigen</fullName>
    </alternativeName>
    <alternativeName>
        <fullName>STA56</fullName>
    </alternativeName>
    <alternativeName>
        <fullName>TSS56</fullName>
    </alternativeName>
</protein>
<organism>
    <name type="scientific">Orientia tsutsugamushi</name>
    <name type="common">Rickettsia tsutsugamushi</name>
    <dbReference type="NCBI Taxonomy" id="784"/>
    <lineage>
        <taxon>Bacteria</taxon>
        <taxon>Pseudomonadati</taxon>
        <taxon>Pseudomonadota</taxon>
        <taxon>Alphaproteobacteria</taxon>
        <taxon>Rickettsiales</taxon>
        <taxon>Rickettsiaceae</taxon>
        <taxon>Rickettsieae</taxon>
        <taxon>Orientia</taxon>
    </lineage>
</organism>